<gene>
    <name evidence="1" type="primary">rplP</name>
    <name type="ordered locus">Rv0708</name>
    <name type="ORF">MTCY210.27</name>
</gene>
<proteinExistence type="evidence at protein level"/>
<name>RL16_MYCTU</name>
<reference key="1">
    <citation type="journal article" date="1998" name="Nature">
        <title>Deciphering the biology of Mycobacterium tuberculosis from the complete genome sequence.</title>
        <authorList>
            <person name="Cole S.T."/>
            <person name="Brosch R."/>
            <person name="Parkhill J."/>
            <person name="Garnier T."/>
            <person name="Churcher C.M."/>
            <person name="Harris D.E."/>
            <person name="Gordon S.V."/>
            <person name="Eiglmeier K."/>
            <person name="Gas S."/>
            <person name="Barry C.E. III"/>
            <person name="Tekaia F."/>
            <person name="Badcock K."/>
            <person name="Basham D."/>
            <person name="Brown D."/>
            <person name="Chillingworth T."/>
            <person name="Connor R."/>
            <person name="Davies R.M."/>
            <person name="Devlin K."/>
            <person name="Feltwell T."/>
            <person name="Gentles S."/>
            <person name="Hamlin N."/>
            <person name="Holroyd S."/>
            <person name="Hornsby T."/>
            <person name="Jagels K."/>
            <person name="Krogh A."/>
            <person name="McLean J."/>
            <person name="Moule S."/>
            <person name="Murphy L.D."/>
            <person name="Oliver S."/>
            <person name="Osborne J."/>
            <person name="Quail M.A."/>
            <person name="Rajandream M.A."/>
            <person name="Rogers J."/>
            <person name="Rutter S."/>
            <person name="Seeger K."/>
            <person name="Skelton S."/>
            <person name="Squares S."/>
            <person name="Squares R."/>
            <person name="Sulston J.E."/>
            <person name="Taylor K."/>
            <person name="Whitehead S."/>
            <person name="Barrell B.G."/>
        </authorList>
    </citation>
    <scope>NUCLEOTIDE SEQUENCE [LARGE SCALE GENOMIC DNA]</scope>
    <source>
        <strain>ATCC 25618 / H37Rv</strain>
    </source>
</reference>
<reference key="2">
    <citation type="journal article" date="2011" name="Mol. Cell. Proteomics">
        <title>Proteogenomic analysis of Mycobacterium tuberculosis by high resolution mass spectrometry.</title>
        <authorList>
            <person name="Kelkar D.S."/>
            <person name="Kumar D."/>
            <person name="Kumar P."/>
            <person name="Balakrishnan L."/>
            <person name="Muthusamy B."/>
            <person name="Yadav A.K."/>
            <person name="Shrivastava P."/>
            <person name="Marimuthu A."/>
            <person name="Anand S."/>
            <person name="Sundaram H."/>
            <person name="Kingsbury R."/>
            <person name="Harsha H.C."/>
            <person name="Nair B."/>
            <person name="Prasad T.S."/>
            <person name="Chauhan D.S."/>
            <person name="Katoch K."/>
            <person name="Katoch V.M."/>
            <person name="Kumar P."/>
            <person name="Chaerkady R."/>
            <person name="Ramachandran S."/>
            <person name="Dash D."/>
            <person name="Pandey A."/>
        </authorList>
    </citation>
    <scope>IDENTIFICATION BY MASS SPECTROMETRY [LARGE SCALE ANALYSIS]</scope>
    <source>
        <strain>ATCC 25618 / H37Rv</strain>
    </source>
</reference>
<dbReference type="EMBL" id="AL123456">
    <property type="protein sequence ID" value="CCP43452.1"/>
    <property type="molecule type" value="Genomic_DNA"/>
</dbReference>
<dbReference type="PIR" id="G70642">
    <property type="entry name" value="G70642"/>
</dbReference>
<dbReference type="RefSeq" id="NP_215222.1">
    <property type="nucleotide sequence ID" value="NC_000962.3"/>
</dbReference>
<dbReference type="RefSeq" id="WP_003403592.1">
    <property type="nucleotide sequence ID" value="NZ_NVQJ01000007.1"/>
</dbReference>
<dbReference type="PDB" id="5V7Q">
    <property type="method" value="EM"/>
    <property type="resolution" value="3.70 A"/>
    <property type="chains" value="M=1-138"/>
</dbReference>
<dbReference type="PDB" id="5V93">
    <property type="method" value="EM"/>
    <property type="resolution" value="4.00 A"/>
    <property type="chains" value="M=1-138"/>
</dbReference>
<dbReference type="PDB" id="7KGB">
    <property type="method" value="EM"/>
    <property type="resolution" value="2.70 A"/>
    <property type="chains" value="M=1-138"/>
</dbReference>
<dbReference type="PDB" id="7MSC">
    <property type="method" value="EM"/>
    <property type="resolution" value="2.97 A"/>
    <property type="chains" value="M=1-138"/>
</dbReference>
<dbReference type="PDB" id="7MSH">
    <property type="method" value="EM"/>
    <property type="resolution" value="3.23 A"/>
    <property type="chains" value="M=1-138"/>
</dbReference>
<dbReference type="PDB" id="7MSM">
    <property type="method" value="EM"/>
    <property type="resolution" value="2.79 A"/>
    <property type="chains" value="M=1-138"/>
</dbReference>
<dbReference type="PDB" id="7MSZ">
    <property type="method" value="EM"/>
    <property type="resolution" value="3.10 A"/>
    <property type="chains" value="M=1-138"/>
</dbReference>
<dbReference type="PDB" id="7MT2">
    <property type="method" value="EM"/>
    <property type="resolution" value="2.76 A"/>
    <property type="chains" value="M=1-138"/>
</dbReference>
<dbReference type="PDB" id="7MT3">
    <property type="method" value="EM"/>
    <property type="resolution" value="2.80 A"/>
    <property type="chains" value="M=1-138"/>
</dbReference>
<dbReference type="PDB" id="7MT7">
    <property type="method" value="EM"/>
    <property type="resolution" value="2.71 A"/>
    <property type="chains" value="M=1-138"/>
</dbReference>
<dbReference type="PDB" id="7SFR">
    <property type="method" value="EM"/>
    <property type="resolution" value="2.60 A"/>
    <property type="chains" value="M=1-138"/>
</dbReference>
<dbReference type="PDBsum" id="5V7Q"/>
<dbReference type="PDBsum" id="5V93"/>
<dbReference type="PDBsum" id="7KGB"/>
<dbReference type="PDBsum" id="7MSC"/>
<dbReference type="PDBsum" id="7MSH"/>
<dbReference type="PDBsum" id="7MSM"/>
<dbReference type="PDBsum" id="7MSZ"/>
<dbReference type="PDBsum" id="7MT2"/>
<dbReference type="PDBsum" id="7MT3"/>
<dbReference type="PDBsum" id="7MT7"/>
<dbReference type="PDBsum" id="7SFR"/>
<dbReference type="EMDB" id="EMD-22865"/>
<dbReference type="EMDB" id="EMD-23961"/>
<dbReference type="EMDB" id="EMD-23962"/>
<dbReference type="EMDB" id="EMD-23969"/>
<dbReference type="EMDB" id="EMD-23972"/>
<dbReference type="EMDB" id="EMD-23974"/>
<dbReference type="EMDB" id="EMD-23975"/>
<dbReference type="EMDB" id="EMD-23976"/>
<dbReference type="EMDB" id="EMD-8645"/>
<dbReference type="SMR" id="P9WHD5"/>
<dbReference type="FunCoup" id="P9WHD5">
    <property type="interactions" value="385"/>
</dbReference>
<dbReference type="STRING" id="83332.Rv0708"/>
<dbReference type="PaxDb" id="83332-Rv0708"/>
<dbReference type="DNASU" id="888377"/>
<dbReference type="GeneID" id="888377"/>
<dbReference type="KEGG" id="mtu:Rv0708"/>
<dbReference type="KEGG" id="mtv:RVBD_0708"/>
<dbReference type="TubercuList" id="Rv0708"/>
<dbReference type="eggNOG" id="COG0197">
    <property type="taxonomic scope" value="Bacteria"/>
</dbReference>
<dbReference type="InParanoid" id="P9WHD5"/>
<dbReference type="OrthoDB" id="9802589at2"/>
<dbReference type="PhylomeDB" id="P9WHD5"/>
<dbReference type="PRO" id="PR:P9WHD5"/>
<dbReference type="Proteomes" id="UP000001584">
    <property type="component" value="Chromosome"/>
</dbReference>
<dbReference type="GO" id="GO:0022625">
    <property type="term" value="C:cytosolic large ribosomal subunit"/>
    <property type="evidence" value="ECO:0000318"/>
    <property type="project" value="GO_Central"/>
</dbReference>
<dbReference type="GO" id="GO:0005886">
    <property type="term" value="C:plasma membrane"/>
    <property type="evidence" value="ECO:0007005"/>
    <property type="project" value="MTBBASE"/>
</dbReference>
<dbReference type="GO" id="GO:0019843">
    <property type="term" value="F:rRNA binding"/>
    <property type="evidence" value="ECO:0000318"/>
    <property type="project" value="GO_Central"/>
</dbReference>
<dbReference type="GO" id="GO:0003735">
    <property type="term" value="F:structural constituent of ribosome"/>
    <property type="evidence" value="ECO:0000318"/>
    <property type="project" value="GO_Central"/>
</dbReference>
<dbReference type="GO" id="GO:0000049">
    <property type="term" value="F:tRNA binding"/>
    <property type="evidence" value="ECO:0007669"/>
    <property type="project" value="UniProtKB-KW"/>
</dbReference>
<dbReference type="GO" id="GO:0006412">
    <property type="term" value="P:translation"/>
    <property type="evidence" value="ECO:0007669"/>
    <property type="project" value="UniProtKB-UniRule"/>
</dbReference>
<dbReference type="CDD" id="cd01433">
    <property type="entry name" value="Ribosomal_L16_L10e"/>
    <property type="match status" value="1"/>
</dbReference>
<dbReference type="FunFam" id="3.90.1170.10:FF:000001">
    <property type="entry name" value="50S ribosomal protein L16"/>
    <property type="match status" value="1"/>
</dbReference>
<dbReference type="Gene3D" id="3.90.1170.10">
    <property type="entry name" value="Ribosomal protein L10e/L16"/>
    <property type="match status" value="1"/>
</dbReference>
<dbReference type="HAMAP" id="MF_01342">
    <property type="entry name" value="Ribosomal_uL16"/>
    <property type="match status" value="1"/>
</dbReference>
<dbReference type="InterPro" id="IPR047873">
    <property type="entry name" value="Ribosomal_uL16"/>
</dbReference>
<dbReference type="InterPro" id="IPR000114">
    <property type="entry name" value="Ribosomal_uL16_bact-type"/>
</dbReference>
<dbReference type="InterPro" id="IPR020798">
    <property type="entry name" value="Ribosomal_uL16_CS"/>
</dbReference>
<dbReference type="InterPro" id="IPR016180">
    <property type="entry name" value="Ribosomal_uL16_dom"/>
</dbReference>
<dbReference type="InterPro" id="IPR036920">
    <property type="entry name" value="Ribosomal_uL16_sf"/>
</dbReference>
<dbReference type="NCBIfam" id="TIGR01164">
    <property type="entry name" value="rplP_bact"/>
    <property type="match status" value="1"/>
</dbReference>
<dbReference type="PANTHER" id="PTHR12220">
    <property type="entry name" value="50S/60S RIBOSOMAL PROTEIN L16"/>
    <property type="match status" value="1"/>
</dbReference>
<dbReference type="PANTHER" id="PTHR12220:SF13">
    <property type="entry name" value="LARGE RIBOSOMAL SUBUNIT PROTEIN UL16M"/>
    <property type="match status" value="1"/>
</dbReference>
<dbReference type="Pfam" id="PF00252">
    <property type="entry name" value="Ribosomal_L16"/>
    <property type="match status" value="1"/>
</dbReference>
<dbReference type="PRINTS" id="PR00060">
    <property type="entry name" value="RIBOSOMALL16"/>
</dbReference>
<dbReference type="SUPFAM" id="SSF54686">
    <property type="entry name" value="Ribosomal protein L16p/L10e"/>
    <property type="match status" value="1"/>
</dbReference>
<dbReference type="PROSITE" id="PS00586">
    <property type="entry name" value="RIBOSOMAL_L16_1"/>
    <property type="match status" value="1"/>
</dbReference>
<dbReference type="PROSITE" id="PS00701">
    <property type="entry name" value="RIBOSOMAL_L16_2"/>
    <property type="match status" value="1"/>
</dbReference>
<accession>P9WHD5</accession>
<accession>L0T7H3</accession>
<accession>P95056</accession>
<protein>
    <recommendedName>
        <fullName evidence="1">Large ribosomal subunit protein uL16</fullName>
    </recommendedName>
    <alternativeName>
        <fullName evidence="3">50S ribosomal protein L16</fullName>
    </alternativeName>
</protein>
<feature type="chain" id="PRO_0000062138" description="Large ribosomal subunit protein uL16">
    <location>
        <begin position="1"/>
        <end position="138"/>
    </location>
</feature>
<feature type="region of interest" description="Disordered" evidence="2">
    <location>
        <begin position="1"/>
        <end position="22"/>
    </location>
</feature>
<feature type="compositionally biased region" description="Basic residues" evidence="2">
    <location>
        <begin position="1"/>
        <end position="17"/>
    </location>
</feature>
<comment type="function">
    <text evidence="1">Binds 23S rRNA and is also seen to make contacts with the A and possibly P site tRNAs.</text>
</comment>
<comment type="subunit">
    <text evidence="1">Part of the 50S ribosomal subunit.</text>
</comment>
<comment type="similarity">
    <text evidence="1">Belongs to the universal ribosomal protein uL16 family.</text>
</comment>
<sequence length="138" mass="15692">MLIPRKVKHRKQHHPRQRGIASGGTTVNFGDYGIQALEHAYVTNRQIESARIAINRHIKRGGKVWINIFPDRPLTKKPAETRMGSGKGSPEWWVANVKPGRVLFELSYPNEGVARAALTRAIHKLPIKARIITREEQF</sequence>
<evidence type="ECO:0000255" key="1">
    <source>
        <dbReference type="HAMAP-Rule" id="MF_01342"/>
    </source>
</evidence>
<evidence type="ECO:0000256" key="2">
    <source>
        <dbReference type="SAM" id="MobiDB-lite"/>
    </source>
</evidence>
<evidence type="ECO:0000305" key="3"/>
<keyword id="KW-0002">3D-structure</keyword>
<keyword id="KW-1185">Reference proteome</keyword>
<keyword id="KW-0687">Ribonucleoprotein</keyword>
<keyword id="KW-0689">Ribosomal protein</keyword>
<keyword id="KW-0694">RNA-binding</keyword>
<keyword id="KW-0699">rRNA-binding</keyword>
<keyword id="KW-0820">tRNA-binding</keyword>
<organism>
    <name type="scientific">Mycobacterium tuberculosis (strain ATCC 25618 / H37Rv)</name>
    <dbReference type="NCBI Taxonomy" id="83332"/>
    <lineage>
        <taxon>Bacteria</taxon>
        <taxon>Bacillati</taxon>
        <taxon>Actinomycetota</taxon>
        <taxon>Actinomycetes</taxon>
        <taxon>Mycobacteriales</taxon>
        <taxon>Mycobacteriaceae</taxon>
        <taxon>Mycobacterium</taxon>
        <taxon>Mycobacterium tuberculosis complex</taxon>
    </lineage>
</organism>